<keyword id="KW-0064">Aspartyl protease</keyword>
<keyword id="KW-0997">Cell inner membrane</keyword>
<keyword id="KW-1003">Cell membrane</keyword>
<keyword id="KW-0378">Hydrolase</keyword>
<keyword id="KW-0472">Membrane</keyword>
<keyword id="KW-0645">Protease</keyword>
<keyword id="KW-1185">Reference proteome</keyword>
<keyword id="KW-0812">Transmembrane</keyword>
<keyword id="KW-1133">Transmembrane helix</keyword>
<reference key="1">
    <citation type="journal article" date="2002" name="Proc. Natl. Acad. Sci. U.S.A.">
        <title>Extensive mosaic structure revealed by the complete genome sequence of uropathogenic Escherichia coli.</title>
        <authorList>
            <person name="Welch R.A."/>
            <person name="Burland V."/>
            <person name="Plunkett G. III"/>
            <person name="Redford P."/>
            <person name="Roesch P."/>
            <person name="Rasko D."/>
            <person name="Buckles E.L."/>
            <person name="Liou S.-R."/>
            <person name="Boutin A."/>
            <person name="Hackett J."/>
            <person name="Stroud D."/>
            <person name="Mayhew G.F."/>
            <person name="Rose D.J."/>
            <person name="Zhou S."/>
            <person name="Schwartz D.C."/>
            <person name="Perna N.T."/>
            <person name="Mobley H.L.T."/>
            <person name="Donnenberg M.S."/>
            <person name="Blattner F.R."/>
        </authorList>
    </citation>
    <scope>NUCLEOTIDE SEQUENCE [LARGE SCALE GENOMIC DNA]</scope>
    <source>
        <strain>CFT073 / ATCC 700928 / UPEC</strain>
    </source>
</reference>
<name>LSPA_ECOL6</name>
<dbReference type="EC" id="3.4.23.36" evidence="1"/>
<dbReference type="EMBL" id="AE014075">
    <property type="protein sequence ID" value="AAN78531.1"/>
    <property type="molecule type" value="Genomic_DNA"/>
</dbReference>
<dbReference type="RefSeq" id="WP_000083369.1">
    <property type="nucleotide sequence ID" value="NZ_CP051263.1"/>
</dbReference>
<dbReference type="SMR" id="Q8FLB6"/>
<dbReference type="STRING" id="199310.c0031"/>
<dbReference type="MEROPS" id="A08.001"/>
<dbReference type="GeneID" id="75169926"/>
<dbReference type="KEGG" id="ecc:c0031"/>
<dbReference type="eggNOG" id="COG0597">
    <property type="taxonomic scope" value="Bacteria"/>
</dbReference>
<dbReference type="HOGENOM" id="CLU_083252_4_0_6"/>
<dbReference type="BioCyc" id="ECOL199310:C0031-MONOMER"/>
<dbReference type="UniPathway" id="UPA00665"/>
<dbReference type="Proteomes" id="UP000001410">
    <property type="component" value="Chromosome"/>
</dbReference>
<dbReference type="GO" id="GO:0005886">
    <property type="term" value="C:plasma membrane"/>
    <property type="evidence" value="ECO:0007669"/>
    <property type="project" value="UniProtKB-SubCell"/>
</dbReference>
<dbReference type="GO" id="GO:0004190">
    <property type="term" value="F:aspartic-type endopeptidase activity"/>
    <property type="evidence" value="ECO:0007669"/>
    <property type="project" value="UniProtKB-UniRule"/>
</dbReference>
<dbReference type="GO" id="GO:0006508">
    <property type="term" value="P:proteolysis"/>
    <property type="evidence" value="ECO:0007669"/>
    <property type="project" value="UniProtKB-KW"/>
</dbReference>
<dbReference type="HAMAP" id="MF_00161">
    <property type="entry name" value="LspA"/>
    <property type="match status" value="1"/>
</dbReference>
<dbReference type="InterPro" id="IPR001872">
    <property type="entry name" value="Peptidase_A8"/>
</dbReference>
<dbReference type="NCBIfam" id="TIGR00077">
    <property type="entry name" value="lspA"/>
    <property type="match status" value="1"/>
</dbReference>
<dbReference type="PANTHER" id="PTHR33695">
    <property type="entry name" value="LIPOPROTEIN SIGNAL PEPTIDASE"/>
    <property type="match status" value="1"/>
</dbReference>
<dbReference type="PANTHER" id="PTHR33695:SF1">
    <property type="entry name" value="LIPOPROTEIN SIGNAL PEPTIDASE"/>
    <property type="match status" value="1"/>
</dbReference>
<dbReference type="Pfam" id="PF01252">
    <property type="entry name" value="Peptidase_A8"/>
    <property type="match status" value="1"/>
</dbReference>
<dbReference type="PRINTS" id="PR00781">
    <property type="entry name" value="LIPOSIGPTASE"/>
</dbReference>
<dbReference type="PROSITE" id="PS00855">
    <property type="entry name" value="SPASE_II"/>
    <property type="match status" value="1"/>
</dbReference>
<sequence>MSQSICSTGLRWLWLVVVVLIIDLGSKYLILQNFALGDTVPLFPSLNLHYARNYGAAFSFLADSGGWQRWFFAGIAIGISVILAVMMYRSKATQKLNNIAYALIIGGALGNLFDRLWHGFVVDMIDFYVGDWHFATFNLADTAICVGAALIVLEGFLPSKAKKQ</sequence>
<gene>
    <name evidence="1" type="primary">lspA</name>
    <name type="ordered locus">c0031</name>
</gene>
<accession>Q8FLB6</accession>
<protein>
    <recommendedName>
        <fullName evidence="1">Lipoprotein signal peptidase</fullName>
        <ecNumber evidence="1">3.4.23.36</ecNumber>
    </recommendedName>
    <alternativeName>
        <fullName evidence="1">Prolipoprotein signal peptidase</fullName>
    </alternativeName>
    <alternativeName>
        <fullName evidence="1">Signal peptidase II</fullName>
        <shortName evidence="1">SPase II</shortName>
    </alternativeName>
</protein>
<proteinExistence type="inferred from homology"/>
<organism>
    <name type="scientific">Escherichia coli O6:H1 (strain CFT073 / ATCC 700928 / UPEC)</name>
    <dbReference type="NCBI Taxonomy" id="199310"/>
    <lineage>
        <taxon>Bacteria</taxon>
        <taxon>Pseudomonadati</taxon>
        <taxon>Pseudomonadota</taxon>
        <taxon>Gammaproteobacteria</taxon>
        <taxon>Enterobacterales</taxon>
        <taxon>Enterobacteriaceae</taxon>
        <taxon>Escherichia</taxon>
    </lineage>
</organism>
<evidence type="ECO:0000255" key="1">
    <source>
        <dbReference type="HAMAP-Rule" id="MF_00161"/>
    </source>
</evidence>
<feature type="chain" id="PRO_0000178779" description="Lipoprotein signal peptidase">
    <location>
        <begin position="1"/>
        <end position="164"/>
    </location>
</feature>
<feature type="transmembrane region" description="Helical" evidence="1">
    <location>
        <begin position="12"/>
        <end position="32"/>
    </location>
</feature>
<feature type="transmembrane region" description="Helical" evidence="1">
    <location>
        <begin position="70"/>
        <end position="90"/>
    </location>
</feature>
<feature type="transmembrane region" description="Helical" evidence="1">
    <location>
        <begin position="102"/>
        <end position="122"/>
    </location>
</feature>
<feature type="transmembrane region" description="Helical" evidence="1">
    <location>
        <begin position="137"/>
        <end position="157"/>
    </location>
</feature>
<feature type="active site" evidence="1">
    <location>
        <position position="123"/>
    </location>
</feature>
<feature type="active site" evidence="1">
    <location>
        <position position="141"/>
    </location>
</feature>
<comment type="function">
    <text evidence="1">This protein specifically catalyzes the removal of signal peptides from prolipoproteins.</text>
</comment>
<comment type="catalytic activity">
    <reaction evidence="1">
        <text>Release of signal peptides from bacterial membrane prolipoproteins. Hydrolyzes -Xaa-Yaa-Zaa-|-(S,diacylglyceryl)Cys-, in which Xaa is hydrophobic (preferably Leu), and Yaa (Ala or Ser) and Zaa (Gly or Ala) have small, neutral side chains.</text>
        <dbReference type="EC" id="3.4.23.36"/>
    </reaction>
</comment>
<comment type="pathway">
    <text evidence="1">Protein modification; lipoprotein biosynthesis (signal peptide cleavage).</text>
</comment>
<comment type="subcellular location">
    <subcellularLocation>
        <location evidence="1">Cell inner membrane</location>
        <topology evidence="1">Multi-pass membrane protein</topology>
    </subcellularLocation>
</comment>
<comment type="similarity">
    <text evidence="1">Belongs to the peptidase A8 family.</text>
</comment>